<keyword id="KW-0963">Cytoplasm</keyword>
<keyword id="KW-0269">Exonuclease</keyword>
<keyword id="KW-0378">Hydrolase</keyword>
<keyword id="KW-0540">Nuclease</keyword>
<protein>
    <recommendedName>
        <fullName evidence="1">Exodeoxyribonuclease 7 large subunit</fullName>
        <ecNumber evidence="1">3.1.11.6</ecNumber>
    </recommendedName>
    <alternativeName>
        <fullName evidence="1">Exodeoxyribonuclease VII large subunit</fullName>
        <shortName evidence="1">Exonuclease VII large subunit</shortName>
    </alternativeName>
</protein>
<organism>
    <name type="scientific">Cereibacter sphaeroides (strain ATCC 17029 / ATH 2.4.9)</name>
    <name type="common">Rhodobacter sphaeroides</name>
    <dbReference type="NCBI Taxonomy" id="349101"/>
    <lineage>
        <taxon>Bacteria</taxon>
        <taxon>Pseudomonadati</taxon>
        <taxon>Pseudomonadota</taxon>
        <taxon>Alphaproteobacteria</taxon>
        <taxon>Rhodobacterales</taxon>
        <taxon>Paracoccaceae</taxon>
        <taxon>Cereibacter</taxon>
    </lineage>
</organism>
<comment type="function">
    <text evidence="1">Bidirectionally degrades single-stranded DNA into large acid-insoluble oligonucleotides, which are then degraded further into small acid-soluble oligonucleotides.</text>
</comment>
<comment type="catalytic activity">
    <reaction evidence="1">
        <text>Exonucleolytic cleavage in either 5'- to 3'- or 3'- to 5'-direction to yield nucleoside 5'-phosphates.</text>
        <dbReference type="EC" id="3.1.11.6"/>
    </reaction>
</comment>
<comment type="subunit">
    <text evidence="1">Heterooligomer composed of large and small subunits.</text>
</comment>
<comment type="subcellular location">
    <subcellularLocation>
        <location evidence="1">Cytoplasm</location>
    </subcellularLocation>
</comment>
<comment type="similarity">
    <text evidence="1">Belongs to the XseA family.</text>
</comment>
<name>EX7L_CERS1</name>
<reference key="1">
    <citation type="submission" date="2007-02" db="EMBL/GenBank/DDBJ databases">
        <title>Complete sequence of chromosome 1 of Rhodobacter sphaeroides ATCC 17029.</title>
        <authorList>
            <person name="Copeland A."/>
            <person name="Lucas S."/>
            <person name="Lapidus A."/>
            <person name="Barry K."/>
            <person name="Detter J.C."/>
            <person name="Glavina del Rio T."/>
            <person name="Hammon N."/>
            <person name="Israni S."/>
            <person name="Dalin E."/>
            <person name="Tice H."/>
            <person name="Pitluck S."/>
            <person name="Kiss H."/>
            <person name="Brettin T."/>
            <person name="Bruce D."/>
            <person name="Han C."/>
            <person name="Tapia R."/>
            <person name="Gilna P."/>
            <person name="Schmutz J."/>
            <person name="Larimer F."/>
            <person name="Land M."/>
            <person name="Hauser L."/>
            <person name="Kyrpides N."/>
            <person name="Mikhailova N."/>
            <person name="Richardson P."/>
            <person name="Mackenzie C."/>
            <person name="Choudhary M."/>
            <person name="Donohue T.J."/>
            <person name="Kaplan S."/>
        </authorList>
    </citation>
    <scope>NUCLEOTIDE SEQUENCE [LARGE SCALE GENOMIC DNA]</scope>
    <source>
        <strain>ATCC 17029 / ATH 2.4.9</strain>
    </source>
</reference>
<proteinExistence type="inferred from homology"/>
<evidence type="ECO:0000255" key="1">
    <source>
        <dbReference type="HAMAP-Rule" id="MF_00378"/>
    </source>
</evidence>
<evidence type="ECO:0000256" key="2">
    <source>
        <dbReference type="SAM" id="MobiDB-lite"/>
    </source>
</evidence>
<sequence length="519" mass="56309">MSDLFEDPAPSRNTPEFTVSELSGAVKRVIEGEFGLVRVRGEIGRVSRPASGHLYFDLKDDRAVMAAICWKGQAGRLSVRPEEGMEVVATGRMTTFPGQSKYQIIVEDMAPAGAGALMAMLEKRRAALAAEGLFDAGRKRPLPFLPRVIGVVTSPSGAVIRDILHRLRDRFPSHVLIWPVAVQGEKCAPEVAAAIRGFNTLPEGGPIPRPDLLIVARGGGSLEDLWGFNEEIVVRAAAESRIPLISAVGHETDTTLIDHAADRRAPTPTAAAEMAVPVRLELLAGLDGQGARLSRCAAETIRRRDQRLRDLARALPRLESLVAGPSQRFDLWSGRLSGALGQSVAARRARLEPLGAHLRPRLLADLVARQKDRLGDRTRSLETCLGRRAERARDRFDALSARLAPAFARLIAETERASRRDAATLGTLAARLDAAPEARLARLSDRLEALDRLRQTLGYRETLKRGYAVVRADGAVLTTKAEAGAAAMLEIEFQDGRLSVGRGKTRKPKEEPPAQGSLL</sequence>
<gene>
    <name evidence="1" type="primary">xseA</name>
    <name type="ordered locus">Rsph17029_0494</name>
</gene>
<feature type="chain" id="PRO_0000303815" description="Exodeoxyribonuclease 7 large subunit">
    <location>
        <begin position="1"/>
        <end position="519"/>
    </location>
</feature>
<feature type="region of interest" description="Disordered" evidence="2">
    <location>
        <begin position="500"/>
        <end position="519"/>
    </location>
</feature>
<dbReference type="EC" id="3.1.11.6" evidence="1"/>
<dbReference type="EMBL" id="CP000577">
    <property type="protein sequence ID" value="ABN75610.1"/>
    <property type="molecule type" value="Genomic_DNA"/>
</dbReference>
<dbReference type="RefSeq" id="WP_011840393.1">
    <property type="nucleotide sequence ID" value="NC_009049.1"/>
</dbReference>
<dbReference type="SMR" id="A3PGZ4"/>
<dbReference type="KEGG" id="rsh:Rsph17029_0494"/>
<dbReference type="HOGENOM" id="CLU_023625_3_1_5"/>
<dbReference type="GO" id="GO:0005737">
    <property type="term" value="C:cytoplasm"/>
    <property type="evidence" value="ECO:0007669"/>
    <property type="project" value="UniProtKB-SubCell"/>
</dbReference>
<dbReference type="GO" id="GO:0009318">
    <property type="term" value="C:exodeoxyribonuclease VII complex"/>
    <property type="evidence" value="ECO:0007669"/>
    <property type="project" value="InterPro"/>
</dbReference>
<dbReference type="GO" id="GO:0008855">
    <property type="term" value="F:exodeoxyribonuclease VII activity"/>
    <property type="evidence" value="ECO:0007669"/>
    <property type="project" value="UniProtKB-UniRule"/>
</dbReference>
<dbReference type="GO" id="GO:0003676">
    <property type="term" value="F:nucleic acid binding"/>
    <property type="evidence" value="ECO:0007669"/>
    <property type="project" value="InterPro"/>
</dbReference>
<dbReference type="GO" id="GO:0006308">
    <property type="term" value="P:DNA catabolic process"/>
    <property type="evidence" value="ECO:0007669"/>
    <property type="project" value="UniProtKB-UniRule"/>
</dbReference>
<dbReference type="CDD" id="cd04489">
    <property type="entry name" value="ExoVII_LU_OBF"/>
    <property type="match status" value="1"/>
</dbReference>
<dbReference type="HAMAP" id="MF_00378">
    <property type="entry name" value="Exonuc_7_L"/>
    <property type="match status" value="1"/>
</dbReference>
<dbReference type="InterPro" id="IPR003753">
    <property type="entry name" value="Exonuc_VII_L"/>
</dbReference>
<dbReference type="InterPro" id="IPR020579">
    <property type="entry name" value="Exonuc_VII_lsu_C"/>
</dbReference>
<dbReference type="InterPro" id="IPR025824">
    <property type="entry name" value="OB-fold_nuc-bd_dom"/>
</dbReference>
<dbReference type="NCBIfam" id="TIGR00237">
    <property type="entry name" value="xseA"/>
    <property type="match status" value="1"/>
</dbReference>
<dbReference type="PANTHER" id="PTHR30008">
    <property type="entry name" value="EXODEOXYRIBONUCLEASE 7 LARGE SUBUNIT"/>
    <property type="match status" value="1"/>
</dbReference>
<dbReference type="PANTHER" id="PTHR30008:SF0">
    <property type="entry name" value="EXODEOXYRIBONUCLEASE 7 LARGE SUBUNIT"/>
    <property type="match status" value="1"/>
</dbReference>
<dbReference type="Pfam" id="PF02601">
    <property type="entry name" value="Exonuc_VII_L"/>
    <property type="match status" value="2"/>
</dbReference>
<dbReference type="Pfam" id="PF13742">
    <property type="entry name" value="tRNA_anti_2"/>
    <property type="match status" value="1"/>
</dbReference>
<accession>A3PGZ4</accession>